<organism>
    <name type="scientific">Rattus norvegicus</name>
    <name type="common">Rat</name>
    <dbReference type="NCBI Taxonomy" id="10116"/>
    <lineage>
        <taxon>Eukaryota</taxon>
        <taxon>Metazoa</taxon>
        <taxon>Chordata</taxon>
        <taxon>Craniata</taxon>
        <taxon>Vertebrata</taxon>
        <taxon>Euteleostomi</taxon>
        <taxon>Mammalia</taxon>
        <taxon>Eutheria</taxon>
        <taxon>Euarchontoglires</taxon>
        <taxon>Glires</taxon>
        <taxon>Rodentia</taxon>
        <taxon>Myomorpha</taxon>
        <taxon>Muroidea</taxon>
        <taxon>Muridae</taxon>
        <taxon>Murinae</taxon>
        <taxon>Rattus</taxon>
    </lineage>
</organism>
<gene>
    <name type="primary">Tigd5</name>
</gene>
<dbReference type="EMBL" id="CH473950">
    <property type="protein sequence ID" value="EDM16036.1"/>
    <property type="molecule type" value="Genomic_DNA"/>
</dbReference>
<dbReference type="EMBL" id="BC161993">
    <property type="protein sequence ID" value="AAI61993.1"/>
    <property type="molecule type" value="mRNA"/>
</dbReference>
<dbReference type="RefSeq" id="NP_001119740.1">
    <property type="nucleotide sequence ID" value="NM_001126268.2"/>
</dbReference>
<dbReference type="SMR" id="B1WC39"/>
<dbReference type="FunCoup" id="B1WC39">
    <property type="interactions" value="270"/>
</dbReference>
<dbReference type="STRING" id="10116.ENSRNOP00000066232"/>
<dbReference type="PhosphoSitePlus" id="B1WC39"/>
<dbReference type="PaxDb" id="10116-ENSRNOP00000066232"/>
<dbReference type="Ensembl" id="ENSRNOT00000056527.3">
    <property type="protein sequence ID" value="ENSRNOP00000066232.1"/>
    <property type="gene ID" value="ENSRNOG00000008686.7"/>
</dbReference>
<dbReference type="GeneID" id="300034"/>
<dbReference type="KEGG" id="rno:300034"/>
<dbReference type="UCSC" id="RGD:1311576">
    <property type="organism name" value="rat"/>
</dbReference>
<dbReference type="AGR" id="RGD:1311576"/>
<dbReference type="CTD" id="84948"/>
<dbReference type="RGD" id="1311576">
    <property type="gene designation" value="Tigd5"/>
</dbReference>
<dbReference type="eggNOG" id="KOG3105">
    <property type="taxonomic scope" value="Eukaryota"/>
</dbReference>
<dbReference type="HOGENOM" id="CLU_018294_1_1_1"/>
<dbReference type="InParanoid" id="B1WC39"/>
<dbReference type="OMA" id="AYKCLAP"/>
<dbReference type="OrthoDB" id="5919228at2759"/>
<dbReference type="PhylomeDB" id="B1WC39"/>
<dbReference type="PRO" id="PR:B1WC39"/>
<dbReference type="Proteomes" id="UP000002494">
    <property type="component" value="Chromosome 7"/>
</dbReference>
<dbReference type="Proteomes" id="UP000234681">
    <property type="component" value="Chromosome 7"/>
</dbReference>
<dbReference type="Bgee" id="ENSRNOG00000008686">
    <property type="expression patterns" value="Expressed in thymus and 19 other cell types or tissues"/>
</dbReference>
<dbReference type="GO" id="GO:0005634">
    <property type="term" value="C:nucleus"/>
    <property type="evidence" value="ECO:0000318"/>
    <property type="project" value="GO_Central"/>
</dbReference>
<dbReference type="GO" id="GO:0003677">
    <property type="term" value="F:DNA binding"/>
    <property type="evidence" value="ECO:0000318"/>
    <property type="project" value="GO_Central"/>
</dbReference>
<dbReference type="FunFam" id="1.10.10.10:FF:000293">
    <property type="entry name" value="Tigger transposable element-derived protein 5"/>
    <property type="match status" value="1"/>
</dbReference>
<dbReference type="Gene3D" id="1.10.10.60">
    <property type="entry name" value="Homeodomain-like"/>
    <property type="match status" value="1"/>
</dbReference>
<dbReference type="Gene3D" id="1.10.10.10">
    <property type="entry name" value="Winged helix-like DNA-binding domain superfamily/Winged helix DNA-binding domain"/>
    <property type="match status" value="1"/>
</dbReference>
<dbReference type="InterPro" id="IPR050863">
    <property type="entry name" value="CenT-Element_Derived"/>
</dbReference>
<dbReference type="InterPro" id="IPR004875">
    <property type="entry name" value="DDE_SF_endonuclease_dom"/>
</dbReference>
<dbReference type="InterPro" id="IPR009057">
    <property type="entry name" value="Homeodomain-like_sf"/>
</dbReference>
<dbReference type="InterPro" id="IPR006600">
    <property type="entry name" value="HTH_CenpB_DNA-bd_dom"/>
</dbReference>
<dbReference type="InterPro" id="IPR007889">
    <property type="entry name" value="HTH_Psq"/>
</dbReference>
<dbReference type="InterPro" id="IPR036388">
    <property type="entry name" value="WH-like_DNA-bd_sf"/>
</dbReference>
<dbReference type="PANTHER" id="PTHR19303:SF56">
    <property type="entry name" value="TIGGER TRANSPOSABLE ELEMENT-DERIVED PROTEIN 5"/>
    <property type="match status" value="1"/>
</dbReference>
<dbReference type="PANTHER" id="PTHR19303">
    <property type="entry name" value="TRANSPOSON"/>
    <property type="match status" value="1"/>
</dbReference>
<dbReference type="Pfam" id="PF04218">
    <property type="entry name" value="CENP-B_N"/>
    <property type="match status" value="1"/>
</dbReference>
<dbReference type="Pfam" id="PF03184">
    <property type="entry name" value="DDE_1"/>
    <property type="match status" value="1"/>
</dbReference>
<dbReference type="Pfam" id="PF03221">
    <property type="entry name" value="HTH_Tnp_Tc5"/>
    <property type="match status" value="1"/>
</dbReference>
<dbReference type="SMART" id="SM00674">
    <property type="entry name" value="CENPB"/>
    <property type="match status" value="1"/>
</dbReference>
<dbReference type="SUPFAM" id="SSF46689">
    <property type="entry name" value="Homeodomain-like"/>
    <property type="match status" value="2"/>
</dbReference>
<dbReference type="PROSITE" id="PS51253">
    <property type="entry name" value="HTH_CENPB"/>
    <property type="match status" value="1"/>
</dbReference>
<dbReference type="PROSITE" id="PS50960">
    <property type="entry name" value="HTH_PSQ"/>
    <property type="match status" value="1"/>
</dbReference>
<name>TIGD5_RAT</name>
<accession>B1WC39</accession>
<evidence type="ECO:0000250" key="1"/>
<evidence type="ECO:0000255" key="2"/>
<evidence type="ECO:0000255" key="3">
    <source>
        <dbReference type="PROSITE-ProRule" id="PRU00320"/>
    </source>
</evidence>
<evidence type="ECO:0000255" key="4">
    <source>
        <dbReference type="PROSITE-ProRule" id="PRU00583"/>
    </source>
</evidence>
<evidence type="ECO:0000256" key="5">
    <source>
        <dbReference type="SAM" id="MobiDB-lite"/>
    </source>
</evidence>
<evidence type="ECO:0000305" key="6"/>
<protein>
    <recommendedName>
        <fullName>Tigger transposable element derived 5</fullName>
    </recommendedName>
</protein>
<proteinExistence type="evidence at transcript level"/>
<sequence>MYPASPSAGPALHPVPHRARLPRPRCLAEPPRSPAPGPGSTARPPPPAPGPRPRVAVKMTFRKAYSIKDKLQAIERVKGGERQASVCRDFGVPGGTLRGWLKDEPKLRWFLDQLGGEVGTQRKKMRLANEEEIDRAVYSWFLTLRQHGVPLSGPVIQAQAEAFARQIYGPECTFKASHGWFWRWQKRHGISSQRIYGEAEPPVAGPAPVKEEPAQPSSAGLLLDGTPATLPHSEGGYGDEQIYNANVTGLYWRLLPEQNATPGTGDSREPGECSRRWCSDRVTVLLAANLTGSHKLKPLVIGQLPDPPSLRHHNQDKFPASYRYSPDAWLSRPLLRGWFFEEFVPGVKRYLRRSCLQQKAVLLVAHPPCPSWTTSMPAVEESEGTPRQCQPELLGSPEELQTPDGAVRVLFLSRGNSRAHIPAPLEHGVVAAFKHLYKRELLRLAVSCASGSPLDFMRSFMLKDMLYLAGLSWDLVQAGSIERCWLLGLRAAFEPGQQPAHQVEEAAEHSRMLSDLTHLAALAYKRLAPEEVAEWLHLDDDGGLPEGCGEEVAPAAPPSPASLPSSIGAGEEEEEEATEQGGVLVPTAGEAVWGLETALRWLESQDPREVGPLRLVQLRSLITMARRLGGIGPSAAASDDGV</sequence>
<comment type="subcellular location">
    <subcellularLocation>
        <location evidence="6">Nucleus</location>
    </subcellularLocation>
</comment>
<comment type="similarity">
    <text evidence="6">Belongs to the tigger transposable element derived protein family.</text>
</comment>
<reference key="1">
    <citation type="submission" date="2005-09" db="EMBL/GenBank/DDBJ databases">
        <authorList>
            <person name="Mural R.J."/>
            <person name="Adams M.D."/>
            <person name="Myers E.W."/>
            <person name="Smith H.O."/>
            <person name="Venter J.C."/>
        </authorList>
    </citation>
    <scope>NUCLEOTIDE SEQUENCE [LARGE SCALE GENOMIC DNA]</scope>
    <source>
        <strain>Brown Norway</strain>
    </source>
</reference>
<reference key="2">
    <citation type="journal article" date="2004" name="Genome Res.">
        <title>The status, quality, and expansion of the NIH full-length cDNA project: the Mammalian Gene Collection (MGC).</title>
        <authorList>
            <consortium name="The MGC Project Team"/>
        </authorList>
    </citation>
    <scope>NUCLEOTIDE SEQUENCE [LARGE SCALE MRNA]</scope>
    <source>
        <tissue>Heart</tissue>
    </source>
</reference>
<feature type="chain" id="PRO_0000416769" description="Tigger transposable element derived 5">
    <location>
        <begin position="1"/>
        <end position="642"/>
    </location>
</feature>
<feature type="domain" description="HTH psq-type" evidence="3">
    <location>
        <begin position="56"/>
        <end position="107"/>
    </location>
</feature>
<feature type="domain" description="HTH CENPB-type" evidence="4">
    <location>
        <begin position="121"/>
        <end position="194"/>
    </location>
</feature>
<feature type="domain" description="DDE-1" evidence="2">
    <location>
        <begin position="239"/>
        <end position="364"/>
    </location>
</feature>
<feature type="DNA-binding region" description="H-T-H motif" evidence="1">
    <location>
        <begin position="83"/>
        <end position="103"/>
    </location>
</feature>
<feature type="DNA-binding region" description="H-T-H motif" evidence="1">
    <location>
        <begin position="154"/>
        <end position="187"/>
    </location>
</feature>
<feature type="region of interest" description="Disordered" evidence="5">
    <location>
        <begin position="1"/>
        <end position="54"/>
    </location>
</feature>
<feature type="region of interest" description="Disordered" evidence="5">
    <location>
        <begin position="198"/>
        <end position="230"/>
    </location>
</feature>
<feature type="region of interest" description="Disordered" evidence="5">
    <location>
        <begin position="543"/>
        <end position="583"/>
    </location>
</feature>
<feature type="compositionally biased region" description="Pro residues" evidence="5">
    <location>
        <begin position="31"/>
        <end position="52"/>
    </location>
</feature>
<feature type="compositionally biased region" description="Low complexity" evidence="5">
    <location>
        <begin position="198"/>
        <end position="208"/>
    </location>
</feature>
<keyword id="KW-0238">DNA-binding</keyword>
<keyword id="KW-0539">Nucleus</keyword>
<keyword id="KW-1185">Reference proteome</keyword>